<reference key="1">
    <citation type="journal article" date="2008" name="DNA Res.">
        <title>The whole-genome sequencing of the obligate intracellular bacterium Orientia tsutsugamushi revealed massive gene amplification during reductive genome evolution.</title>
        <authorList>
            <person name="Nakayama K."/>
            <person name="Yamashita A."/>
            <person name="Kurokawa K."/>
            <person name="Morimoto T."/>
            <person name="Ogawa M."/>
            <person name="Fukuhara M."/>
            <person name="Urakami H."/>
            <person name="Ohnishi M."/>
            <person name="Uchiyama I."/>
            <person name="Ogura Y."/>
            <person name="Ooka T."/>
            <person name="Oshima K."/>
            <person name="Tamura A."/>
            <person name="Hattori M."/>
            <person name="Hayashi T."/>
        </authorList>
    </citation>
    <scope>NUCLEOTIDE SEQUENCE [LARGE SCALE GENOMIC DNA]</scope>
    <source>
        <strain>Ikeda</strain>
    </source>
</reference>
<evidence type="ECO:0000255" key="1">
    <source>
        <dbReference type="HAMAP-Rule" id="MF_00147"/>
    </source>
</evidence>
<protein>
    <recommendedName>
        <fullName evidence="1">Triosephosphate isomerase</fullName>
        <shortName evidence="1">TIM</shortName>
        <shortName evidence="1">TPI</shortName>
        <ecNumber evidence="1">5.3.1.1</ecNumber>
    </recommendedName>
    <alternativeName>
        <fullName evidence="1">Triose-phosphate isomerase</fullName>
    </alternativeName>
</protein>
<comment type="function">
    <text evidence="1">Involved in the gluconeogenesis. Catalyzes stereospecifically the conversion of dihydroxyacetone phosphate (DHAP) to D-glyceraldehyde-3-phosphate (G3P).</text>
</comment>
<comment type="catalytic activity">
    <reaction evidence="1">
        <text>D-glyceraldehyde 3-phosphate = dihydroxyacetone phosphate</text>
        <dbReference type="Rhea" id="RHEA:18585"/>
        <dbReference type="ChEBI" id="CHEBI:57642"/>
        <dbReference type="ChEBI" id="CHEBI:59776"/>
        <dbReference type="EC" id="5.3.1.1"/>
    </reaction>
</comment>
<comment type="pathway">
    <text evidence="1">Carbohydrate biosynthesis; gluconeogenesis.</text>
</comment>
<comment type="pathway">
    <text evidence="1">Carbohydrate degradation; glycolysis; D-glyceraldehyde 3-phosphate from glycerone phosphate: step 1/1.</text>
</comment>
<comment type="subunit">
    <text evidence="1">Homodimer.</text>
</comment>
<comment type="subcellular location">
    <subcellularLocation>
        <location evidence="1">Cytoplasm</location>
    </subcellularLocation>
</comment>
<comment type="similarity">
    <text evidence="1">Belongs to the triosephosphate isomerase family.</text>
</comment>
<accession>B3CTU9</accession>
<dbReference type="EC" id="5.3.1.1" evidence="1"/>
<dbReference type="EMBL" id="AP008981">
    <property type="protein sequence ID" value="BAG40796.1"/>
    <property type="molecule type" value="Genomic_DNA"/>
</dbReference>
<dbReference type="RefSeq" id="WP_012461844.1">
    <property type="nucleotide sequence ID" value="NC_010793.1"/>
</dbReference>
<dbReference type="SMR" id="B3CTU9"/>
<dbReference type="KEGG" id="ott:OTT_1338"/>
<dbReference type="HOGENOM" id="CLU_024251_2_3_5"/>
<dbReference type="OrthoDB" id="9809429at2"/>
<dbReference type="UniPathway" id="UPA00109">
    <property type="reaction ID" value="UER00189"/>
</dbReference>
<dbReference type="UniPathway" id="UPA00138"/>
<dbReference type="Proteomes" id="UP000001033">
    <property type="component" value="Chromosome"/>
</dbReference>
<dbReference type="GO" id="GO:0005829">
    <property type="term" value="C:cytosol"/>
    <property type="evidence" value="ECO:0007669"/>
    <property type="project" value="TreeGrafter"/>
</dbReference>
<dbReference type="GO" id="GO:0004807">
    <property type="term" value="F:triose-phosphate isomerase activity"/>
    <property type="evidence" value="ECO:0007669"/>
    <property type="project" value="UniProtKB-UniRule"/>
</dbReference>
<dbReference type="GO" id="GO:0006094">
    <property type="term" value="P:gluconeogenesis"/>
    <property type="evidence" value="ECO:0007669"/>
    <property type="project" value="UniProtKB-UniRule"/>
</dbReference>
<dbReference type="GO" id="GO:0046166">
    <property type="term" value="P:glyceraldehyde-3-phosphate biosynthetic process"/>
    <property type="evidence" value="ECO:0007669"/>
    <property type="project" value="TreeGrafter"/>
</dbReference>
<dbReference type="GO" id="GO:0019563">
    <property type="term" value="P:glycerol catabolic process"/>
    <property type="evidence" value="ECO:0007669"/>
    <property type="project" value="TreeGrafter"/>
</dbReference>
<dbReference type="GO" id="GO:0006096">
    <property type="term" value="P:glycolytic process"/>
    <property type="evidence" value="ECO:0007669"/>
    <property type="project" value="UniProtKB-UniRule"/>
</dbReference>
<dbReference type="CDD" id="cd00311">
    <property type="entry name" value="TIM"/>
    <property type="match status" value="1"/>
</dbReference>
<dbReference type="Gene3D" id="3.20.20.70">
    <property type="entry name" value="Aldolase class I"/>
    <property type="match status" value="1"/>
</dbReference>
<dbReference type="HAMAP" id="MF_00147_B">
    <property type="entry name" value="TIM_B"/>
    <property type="match status" value="1"/>
</dbReference>
<dbReference type="InterPro" id="IPR013785">
    <property type="entry name" value="Aldolase_TIM"/>
</dbReference>
<dbReference type="InterPro" id="IPR035990">
    <property type="entry name" value="TIM_sf"/>
</dbReference>
<dbReference type="InterPro" id="IPR022896">
    <property type="entry name" value="TrioseP_Isoase_bac/euk"/>
</dbReference>
<dbReference type="InterPro" id="IPR000652">
    <property type="entry name" value="Triosephosphate_isomerase"/>
</dbReference>
<dbReference type="InterPro" id="IPR020861">
    <property type="entry name" value="Triosephosphate_isomerase_AS"/>
</dbReference>
<dbReference type="NCBIfam" id="TIGR00419">
    <property type="entry name" value="tim"/>
    <property type="match status" value="1"/>
</dbReference>
<dbReference type="PANTHER" id="PTHR21139">
    <property type="entry name" value="TRIOSEPHOSPHATE ISOMERASE"/>
    <property type="match status" value="1"/>
</dbReference>
<dbReference type="PANTHER" id="PTHR21139:SF42">
    <property type="entry name" value="TRIOSEPHOSPHATE ISOMERASE"/>
    <property type="match status" value="1"/>
</dbReference>
<dbReference type="Pfam" id="PF00121">
    <property type="entry name" value="TIM"/>
    <property type="match status" value="1"/>
</dbReference>
<dbReference type="SUPFAM" id="SSF51351">
    <property type="entry name" value="Triosephosphate isomerase (TIM)"/>
    <property type="match status" value="1"/>
</dbReference>
<dbReference type="PROSITE" id="PS00171">
    <property type="entry name" value="TIM_1"/>
    <property type="match status" value="1"/>
</dbReference>
<dbReference type="PROSITE" id="PS51440">
    <property type="entry name" value="TIM_2"/>
    <property type="match status" value="1"/>
</dbReference>
<feature type="chain" id="PRO_1000096517" description="Triosephosphate isomerase">
    <location>
        <begin position="1"/>
        <end position="249"/>
    </location>
</feature>
<feature type="active site" description="Electrophile" evidence="1">
    <location>
        <position position="95"/>
    </location>
</feature>
<feature type="active site" description="Proton acceptor" evidence="1">
    <location>
        <position position="163"/>
    </location>
</feature>
<feature type="binding site" evidence="1">
    <location>
        <begin position="8"/>
        <end position="10"/>
    </location>
    <ligand>
        <name>substrate</name>
    </ligand>
</feature>
<feature type="binding site" evidence="1">
    <location>
        <position position="169"/>
    </location>
    <ligand>
        <name>substrate</name>
    </ligand>
</feature>
<feature type="binding site" evidence="1">
    <location>
        <position position="209"/>
    </location>
    <ligand>
        <name>substrate</name>
    </ligand>
</feature>
<sequence>MESIVVSNWKMHFSFSEACNYLNLITSLNSNLNLAKMIFAVPNLYLSGLKLKFNDTYHFSAQDVSMITESSGPYTGEISASMLKNLNVNYAIVGHSERRLLFYEDANTIALKVRNCINNAIVPIVCIGEPIEARKNKTYLQYLAQQLSSISFSFTKNVIIAYEPIWSIGSDMIPTIDDIYEVVTMIREIQNRYIPHNIENSVKIVYGGSVSANNIHQILTAGVDGVLIGKASLKLESLTTIIKTVQGLD</sequence>
<gene>
    <name evidence="1" type="primary">tpiA</name>
    <name type="ordered locus">OTT_1338</name>
</gene>
<proteinExistence type="inferred from homology"/>
<organism>
    <name type="scientific">Orientia tsutsugamushi (strain Ikeda)</name>
    <name type="common">Rickettsia tsutsugamushi</name>
    <dbReference type="NCBI Taxonomy" id="334380"/>
    <lineage>
        <taxon>Bacteria</taxon>
        <taxon>Pseudomonadati</taxon>
        <taxon>Pseudomonadota</taxon>
        <taxon>Alphaproteobacteria</taxon>
        <taxon>Rickettsiales</taxon>
        <taxon>Rickettsiaceae</taxon>
        <taxon>Rickettsieae</taxon>
        <taxon>Orientia</taxon>
    </lineage>
</organism>
<keyword id="KW-0963">Cytoplasm</keyword>
<keyword id="KW-0312">Gluconeogenesis</keyword>
<keyword id="KW-0324">Glycolysis</keyword>
<keyword id="KW-0413">Isomerase</keyword>
<name>TPIS_ORITI</name>